<gene>
    <name evidence="1" type="primary">queC</name>
    <name type="ordered locus">MTH_1108</name>
</gene>
<evidence type="ECO:0000255" key="1">
    <source>
        <dbReference type="HAMAP-Rule" id="MF_01633"/>
    </source>
</evidence>
<feature type="chain" id="PRO_0000107288" description="7-cyano-7-deazaguanine synthase">
    <location>
        <begin position="1"/>
        <end position="222"/>
    </location>
</feature>
<feature type="binding site" evidence="1">
    <location>
        <begin position="7"/>
        <end position="17"/>
    </location>
    <ligand>
        <name>ATP</name>
        <dbReference type="ChEBI" id="CHEBI:30616"/>
    </ligand>
</feature>
<feature type="binding site" evidence="1">
    <location>
        <position position="188"/>
    </location>
    <ligand>
        <name>Zn(2+)</name>
        <dbReference type="ChEBI" id="CHEBI:29105"/>
    </ligand>
</feature>
<feature type="binding site" evidence="1">
    <location>
        <position position="196"/>
    </location>
    <ligand>
        <name>Zn(2+)</name>
        <dbReference type="ChEBI" id="CHEBI:29105"/>
    </ligand>
</feature>
<feature type="binding site" evidence="1">
    <location>
        <position position="199"/>
    </location>
    <ligand>
        <name>Zn(2+)</name>
        <dbReference type="ChEBI" id="CHEBI:29105"/>
    </ligand>
</feature>
<feature type="binding site" evidence="1">
    <location>
        <position position="202"/>
    </location>
    <ligand>
        <name>Zn(2+)</name>
        <dbReference type="ChEBI" id="CHEBI:29105"/>
    </ligand>
</feature>
<proteinExistence type="inferred from homology"/>
<comment type="function">
    <text evidence="1">Catalyzes the ATP-dependent conversion of 7-carboxy-7-deazaguanine (CDG) to 7-cyano-7-deazaguanine (preQ(0)).</text>
</comment>
<comment type="catalytic activity">
    <reaction evidence="1">
        <text>7-carboxy-7-deazaguanine + NH4(+) + ATP = 7-cyano-7-deazaguanine + ADP + phosphate + H2O + H(+)</text>
        <dbReference type="Rhea" id="RHEA:27982"/>
        <dbReference type="ChEBI" id="CHEBI:15377"/>
        <dbReference type="ChEBI" id="CHEBI:15378"/>
        <dbReference type="ChEBI" id="CHEBI:28938"/>
        <dbReference type="ChEBI" id="CHEBI:30616"/>
        <dbReference type="ChEBI" id="CHEBI:43474"/>
        <dbReference type="ChEBI" id="CHEBI:45075"/>
        <dbReference type="ChEBI" id="CHEBI:61036"/>
        <dbReference type="ChEBI" id="CHEBI:456216"/>
        <dbReference type="EC" id="6.3.4.20"/>
    </reaction>
</comment>
<comment type="cofactor">
    <cofactor evidence="1">
        <name>Zn(2+)</name>
        <dbReference type="ChEBI" id="CHEBI:29105"/>
    </cofactor>
    <text evidence="1">Binds 1 zinc ion per subunit.</text>
</comment>
<comment type="pathway">
    <text evidence="1">Purine metabolism; 7-cyano-7-deazaguanine biosynthesis.</text>
</comment>
<comment type="similarity">
    <text evidence="1">Belongs to the QueC family.</text>
</comment>
<accession>O27180</accession>
<name>QUEC_METTH</name>
<reference key="1">
    <citation type="journal article" date="1998" name="J. Biol. Chem.">
        <title>Purification, regulation, and molecular and biochemical characterization of pyruvate carboxylase from Methanobacterium thermoautotrophicum strain deltaH.</title>
        <authorList>
            <person name="Mukhopadhyay B."/>
            <person name="Stoddard S.F."/>
            <person name="Wolfe R.S."/>
        </authorList>
    </citation>
    <scope>NUCLEOTIDE SEQUENCE [GENOMIC DNA]</scope>
    <source>
        <strain>ATCC 29096 / DSM 1053 / JCM 10044 / NBRC 100330 / Delta H</strain>
    </source>
</reference>
<reference key="2">
    <citation type="journal article" date="1997" name="J. Bacteriol.">
        <title>Complete genome sequence of Methanobacterium thermoautotrophicum deltaH: functional analysis and comparative genomics.</title>
        <authorList>
            <person name="Smith D.R."/>
            <person name="Doucette-Stamm L.A."/>
            <person name="Deloughery C."/>
            <person name="Lee H.-M."/>
            <person name="Dubois J."/>
            <person name="Aldredge T."/>
            <person name="Bashirzadeh R."/>
            <person name="Blakely D."/>
            <person name="Cook R."/>
            <person name="Gilbert K."/>
            <person name="Harrison D."/>
            <person name="Hoang L."/>
            <person name="Keagle P."/>
            <person name="Lumm W."/>
            <person name="Pothier B."/>
            <person name="Qiu D."/>
            <person name="Spadafora R."/>
            <person name="Vicare R."/>
            <person name="Wang Y."/>
            <person name="Wierzbowski J."/>
            <person name="Gibson R."/>
            <person name="Jiwani N."/>
            <person name="Caruso A."/>
            <person name="Bush D."/>
            <person name="Safer H."/>
            <person name="Patwell D."/>
            <person name="Prabhakar S."/>
            <person name="McDougall S."/>
            <person name="Shimer G."/>
            <person name="Goyal A."/>
            <person name="Pietrovski S."/>
            <person name="Church G.M."/>
            <person name="Daniels C.J."/>
            <person name="Mao J.-I."/>
            <person name="Rice P."/>
            <person name="Noelling J."/>
            <person name="Reeve J.N."/>
        </authorList>
    </citation>
    <scope>NUCLEOTIDE SEQUENCE [LARGE SCALE GENOMIC DNA]</scope>
    <source>
        <strain>ATCC 29096 / DSM 1053 / JCM 10044 / NBRC 100330 / Delta H</strain>
    </source>
</reference>
<protein>
    <recommendedName>
        <fullName evidence="1">7-cyano-7-deazaguanine synthase</fullName>
        <ecNumber evidence="1">6.3.4.20</ecNumber>
    </recommendedName>
    <alternativeName>
        <fullName evidence="1">7-cyano-7-carbaguanine synthase</fullName>
    </alternativeName>
    <alternativeName>
        <fullName evidence="1">Archaeosine biosynthesis protein QueC</fullName>
    </alternativeName>
    <alternativeName>
        <fullName evidence="1">PreQ(0) synthase</fullName>
    </alternativeName>
</protein>
<dbReference type="EC" id="6.3.4.20" evidence="1"/>
<dbReference type="EMBL" id="AF039105">
    <property type="protein sequence ID" value="AAC12720.1"/>
    <property type="molecule type" value="Genomic_DNA"/>
</dbReference>
<dbReference type="EMBL" id="AE000666">
    <property type="protein sequence ID" value="AAB85597.1"/>
    <property type="molecule type" value="Genomic_DNA"/>
</dbReference>
<dbReference type="PIR" id="D69014">
    <property type="entry name" value="D69014"/>
</dbReference>
<dbReference type="RefSeq" id="WP_010876732.1">
    <property type="nucleotide sequence ID" value="NC_000916.1"/>
</dbReference>
<dbReference type="SMR" id="O27180"/>
<dbReference type="STRING" id="187420.MTH_1108"/>
<dbReference type="PaxDb" id="187420-MTH_1108"/>
<dbReference type="EnsemblBacteria" id="AAB85597">
    <property type="protein sequence ID" value="AAB85597"/>
    <property type="gene ID" value="MTH_1108"/>
</dbReference>
<dbReference type="GeneID" id="77401638"/>
<dbReference type="KEGG" id="mth:MTH_1108"/>
<dbReference type="PATRIC" id="fig|187420.15.peg.1084"/>
<dbReference type="HOGENOM" id="CLU_081854_1_0_2"/>
<dbReference type="InParanoid" id="O27180"/>
<dbReference type="UniPathway" id="UPA00391"/>
<dbReference type="Proteomes" id="UP000005223">
    <property type="component" value="Chromosome"/>
</dbReference>
<dbReference type="GO" id="GO:0005524">
    <property type="term" value="F:ATP binding"/>
    <property type="evidence" value="ECO:0007669"/>
    <property type="project" value="UniProtKB-UniRule"/>
</dbReference>
<dbReference type="GO" id="GO:0016879">
    <property type="term" value="F:ligase activity, forming carbon-nitrogen bonds"/>
    <property type="evidence" value="ECO:0007669"/>
    <property type="project" value="UniProtKB-UniRule"/>
</dbReference>
<dbReference type="GO" id="GO:0008270">
    <property type="term" value="F:zinc ion binding"/>
    <property type="evidence" value="ECO:0007669"/>
    <property type="project" value="UniProtKB-UniRule"/>
</dbReference>
<dbReference type="CDD" id="cd01995">
    <property type="entry name" value="QueC-like"/>
    <property type="match status" value="1"/>
</dbReference>
<dbReference type="Gene3D" id="3.40.50.620">
    <property type="entry name" value="HUPs"/>
    <property type="match status" value="1"/>
</dbReference>
<dbReference type="HAMAP" id="MF_01633">
    <property type="entry name" value="QueC"/>
    <property type="match status" value="1"/>
</dbReference>
<dbReference type="InterPro" id="IPR018317">
    <property type="entry name" value="QueC"/>
</dbReference>
<dbReference type="InterPro" id="IPR014729">
    <property type="entry name" value="Rossmann-like_a/b/a_fold"/>
</dbReference>
<dbReference type="NCBIfam" id="TIGR00364">
    <property type="entry name" value="7-cyano-7-deazaguanine synthase QueC"/>
    <property type="match status" value="1"/>
</dbReference>
<dbReference type="PANTHER" id="PTHR42914">
    <property type="entry name" value="7-CYANO-7-DEAZAGUANINE SYNTHASE"/>
    <property type="match status" value="1"/>
</dbReference>
<dbReference type="PANTHER" id="PTHR42914:SF1">
    <property type="entry name" value="7-CYANO-7-DEAZAGUANINE SYNTHASE"/>
    <property type="match status" value="1"/>
</dbReference>
<dbReference type="Pfam" id="PF06508">
    <property type="entry name" value="QueC"/>
    <property type="match status" value="1"/>
</dbReference>
<dbReference type="PIRSF" id="PIRSF006293">
    <property type="entry name" value="ExsB"/>
    <property type="match status" value="1"/>
</dbReference>
<dbReference type="SUPFAM" id="SSF52402">
    <property type="entry name" value="Adenine nucleotide alpha hydrolases-like"/>
    <property type="match status" value="1"/>
</dbReference>
<organism>
    <name type="scientific">Methanothermobacter thermautotrophicus (strain ATCC 29096 / DSM 1053 / JCM 10044 / NBRC 100330 / Delta H)</name>
    <name type="common">Methanobacterium thermoautotrophicum</name>
    <dbReference type="NCBI Taxonomy" id="187420"/>
    <lineage>
        <taxon>Archaea</taxon>
        <taxon>Methanobacteriati</taxon>
        <taxon>Methanobacteriota</taxon>
        <taxon>Methanomada group</taxon>
        <taxon>Methanobacteria</taxon>
        <taxon>Methanobacteriales</taxon>
        <taxon>Methanobacteriaceae</taxon>
        <taxon>Methanothermobacter</taxon>
    </lineage>
</organism>
<sequence>MRAISILSGGMDSAVATALMMDEYEIHAITFDYGQRSARMELEYARRLSEHLGIEHTTLDLQWLGRLGGSVLTAGGDIPSPSNLDDTVECLETARKVWVPGRNLVFTSIGVSFAEAMDAGAVIVGWDLEEAETFPDNSEEFLDAFNRLLEIGTLDGVRVVAPVIGMTKREIVEAGHEVGLPFELTYSCYAGDRVHCGVCESCMRRRRAFELAGIDDPTEYRE</sequence>
<keyword id="KW-0067">ATP-binding</keyword>
<keyword id="KW-0436">Ligase</keyword>
<keyword id="KW-0479">Metal-binding</keyword>
<keyword id="KW-0547">Nucleotide-binding</keyword>
<keyword id="KW-1185">Reference proteome</keyword>
<keyword id="KW-0862">Zinc</keyword>